<comment type="function">
    <text evidence="1">Binds directly to 23S rRNA. The L1 stalk is quite mobile in the ribosome, and is involved in E site tRNA release.</text>
</comment>
<comment type="function">
    <text evidence="1">Protein L1 is also a translational repressor protein, it controls the translation of the L11 operon by binding to its mRNA.</text>
</comment>
<comment type="subunit">
    <text evidence="1">Part of the 50S ribosomal subunit.</text>
</comment>
<comment type="similarity">
    <text evidence="1">Belongs to the universal ribosomal protein uL1 family.</text>
</comment>
<feature type="chain" id="PRO_1000141473" description="Large ribosomal subunit protein uL1">
    <location>
        <begin position="1"/>
        <end position="232"/>
    </location>
</feature>
<dbReference type="EMBL" id="CP001185">
    <property type="protein sequence ID" value="ACJ75113.1"/>
    <property type="molecule type" value="Genomic_DNA"/>
</dbReference>
<dbReference type="RefSeq" id="WP_004104445.1">
    <property type="nucleotide sequence ID" value="NC_011653.1"/>
</dbReference>
<dbReference type="SMR" id="B7IG99"/>
<dbReference type="STRING" id="484019.THA_630"/>
<dbReference type="KEGG" id="taf:THA_630"/>
<dbReference type="eggNOG" id="COG0081">
    <property type="taxonomic scope" value="Bacteria"/>
</dbReference>
<dbReference type="HOGENOM" id="CLU_062853_0_0_0"/>
<dbReference type="OrthoDB" id="9803740at2"/>
<dbReference type="Proteomes" id="UP000002453">
    <property type="component" value="Chromosome"/>
</dbReference>
<dbReference type="GO" id="GO:0015934">
    <property type="term" value="C:large ribosomal subunit"/>
    <property type="evidence" value="ECO:0007669"/>
    <property type="project" value="InterPro"/>
</dbReference>
<dbReference type="GO" id="GO:0019843">
    <property type="term" value="F:rRNA binding"/>
    <property type="evidence" value="ECO:0007669"/>
    <property type="project" value="UniProtKB-UniRule"/>
</dbReference>
<dbReference type="GO" id="GO:0003735">
    <property type="term" value="F:structural constituent of ribosome"/>
    <property type="evidence" value="ECO:0007669"/>
    <property type="project" value="InterPro"/>
</dbReference>
<dbReference type="GO" id="GO:0000049">
    <property type="term" value="F:tRNA binding"/>
    <property type="evidence" value="ECO:0007669"/>
    <property type="project" value="UniProtKB-KW"/>
</dbReference>
<dbReference type="GO" id="GO:0006417">
    <property type="term" value="P:regulation of translation"/>
    <property type="evidence" value="ECO:0007669"/>
    <property type="project" value="UniProtKB-KW"/>
</dbReference>
<dbReference type="GO" id="GO:0006412">
    <property type="term" value="P:translation"/>
    <property type="evidence" value="ECO:0007669"/>
    <property type="project" value="UniProtKB-UniRule"/>
</dbReference>
<dbReference type="CDD" id="cd00403">
    <property type="entry name" value="Ribosomal_L1"/>
    <property type="match status" value="1"/>
</dbReference>
<dbReference type="FunFam" id="3.40.50.790:FF:000001">
    <property type="entry name" value="50S ribosomal protein L1"/>
    <property type="match status" value="1"/>
</dbReference>
<dbReference type="Gene3D" id="3.30.190.20">
    <property type="match status" value="1"/>
</dbReference>
<dbReference type="Gene3D" id="3.40.50.790">
    <property type="match status" value="1"/>
</dbReference>
<dbReference type="HAMAP" id="MF_01318_B">
    <property type="entry name" value="Ribosomal_uL1_B"/>
    <property type="match status" value="1"/>
</dbReference>
<dbReference type="InterPro" id="IPR005878">
    <property type="entry name" value="Ribosom_uL1_bac-type"/>
</dbReference>
<dbReference type="InterPro" id="IPR002143">
    <property type="entry name" value="Ribosomal_uL1"/>
</dbReference>
<dbReference type="InterPro" id="IPR023674">
    <property type="entry name" value="Ribosomal_uL1-like"/>
</dbReference>
<dbReference type="InterPro" id="IPR028364">
    <property type="entry name" value="Ribosomal_uL1/biogenesis"/>
</dbReference>
<dbReference type="InterPro" id="IPR016095">
    <property type="entry name" value="Ribosomal_uL1_3-a/b-sand"/>
</dbReference>
<dbReference type="InterPro" id="IPR023673">
    <property type="entry name" value="Ribosomal_uL1_CS"/>
</dbReference>
<dbReference type="NCBIfam" id="TIGR01169">
    <property type="entry name" value="rplA_bact"/>
    <property type="match status" value="1"/>
</dbReference>
<dbReference type="PANTHER" id="PTHR36427">
    <property type="entry name" value="54S RIBOSOMAL PROTEIN L1, MITOCHONDRIAL"/>
    <property type="match status" value="1"/>
</dbReference>
<dbReference type="PANTHER" id="PTHR36427:SF3">
    <property type="entry name" value="LARGE RIBOSOMAL SUBUNIT PROTEIN UL1M"/>
    <property type="match status" value="1"/>
</dbReference>
<dbReference type="Pfam" id="PF00687">
    <property type="entry name" value="Ribosomal_L1"/>
    <property type="match status" value="1"/>
</dbReference>
<dbReference type="PIRSF" id="PIRSF002155">
    <property type="entry name" value="Ribosomal_L1"/>
    <property type="match status" value="1"/>
</dbReference>
<dbReference type="SUPFAM" id="SSF56808">
    <property type="entry name" value="Ribosomal protein L1"/>
    <property type="match status" value="1"/>
</dbReference>
<dbReference type="PROSITE" id="PS01199">
    <property type="entry name" value="RIBOSOMAL_L1"/>
    <property type="match status" value="1"/>
</dbReference>
<gene>
    <name evidence="1" type="primary">rplA</name>
    <name type="ordered locus">THA_630</name>
</gene>
<sequence length="232" mass="25518">MPKHSKRYNEVRKLVDRNKDYDLNEAIDLAKKVATAKFDETVELHIKTNIDYRKSDQQIRSTIALPHGTGKEVKVLVFATGEKAEEAKAAGADYVGAEDLAEKIQKENFLDFDVAIATPDMMRVIGKLGKILGPRGLMPNPKAGTVTNDVASAVKEFKKGRMEVRTDKTGNLHIPVGKASFDNEKLKENIKSAYEQILNLKPAGVKGNFIKKVVLSTTMGPGIKVDPATLTQ</sequence>
<evidence type="ECO:0000255" key="1">
    <source>
        <dbReference type="HAMAP-Rule" id="MF_01318"/>
    </source>
</evidence>
<evidence type="ECO:0000305" key="2"/>
<proteinExistence type="inferred from homology"/>
<keyword id="KW-1185">Reference proteome</keyword>
<keyword id="KW-0678">Repressor</keyword>
<keyword id="KW-0687">Ribonucleoprotein</keyword>
<keyword id="KW-0689">Ribosomal protein</keyword>
<keyword id="KW-0694">RNA-binding</keyword>
<keyword id="KW-0699">rRNA-binding</keyword>
<keyword id="KW-0810">Translation regulation</keyword>
<keyword id="KW-0820">tRNA-binding</keyword>
<name>RL1_THEAB</name>
<protein>
    <recommendedName>
        <fullName evidence="1">Large ribosomal subunit protein uL1</fullName>
    </recommendedName>
    <alternativeName>
        <fullName evidence="2">50S ribosomal protein L1</fullName>
    </alternativeName>
</protein>
<reference key="1">
    <citation type="journal article" date="2009" name="J. Bacteriol.">
        <title>The genome of Thermosipho africanus TCF52B: lateral genetic connections to the Firmicutes and Archaea.</title>
        <authorList>
            <person name="Nesboe C.L."/>
            <person name="Bapteste E."/>
            <person name="Curtis B."/>
            <person name="Dahle H."/>
            <person name="Lopez P."/>
            <person name="Macleod D."/>
            <person name="Dlutek M."/>
            <person name="Bowman S."/>
            <person name="Zhaxybayeva O."/>
            <person name="Birkeland N.-K."/>
            <person name="Doolittle W.F."/>
        </authorList>
    </citation>
    <scope>NUCLEOTIDE SEQUENCE [LARGE SCALE GENOMIC DNA]</scope>
    <source>
        <strain>TCF52B</strain>
    </source>
</reference>
<organism>
    <name type="scientific">Thermosipho africanus (strain TCF52B)</name>
    <dbReference type="NCBI Taxonomy" id="484019"/>
    <lineage>
        <taxon>Bacteria</taxon>
        <taxon>Thermotogati</taxon>
        <taxon>Thermotogota</taxon>
        <taxon>Thermotogae</taxon>
        <taxon>Thermotogales</taxon>
        <taxon>Fervidobacteriaceae</taxon>
        <taxon>Thermosipho</taxon>
    </lineage>
</organism>
<accession>B7IG99</accession>